<keyword id="KW-0997">Cell inner membrane</keyword>
<keyword id="KW-1003">Cell membrane</keyword>
<keyword id="KW-0472">Membrane</keyword>
<keyword id="KW-0653">Protein transport</keyword>
<keyword id="KW-0811">Translocation</keyword>
<keyword id="KW-0812">Transmembrane</keyword>
<keyword id="KW-1133">Transmembrane helix</keyword>
<keyword id="KW-0813">Transport</keyword>
<accession>A3NE88</accession>
<name>TATA_BURP6</name>
<dbReference type="EMBL" id="CP000570">
    <property type="protein sequence ID" value="ABN83278.1"/>
    <property type="molecule type" value="Genomic_DNA"/>
</dbReference>
<dbReference type="RefSeq" id="WP_004199902.1">
    <property type="nucleotide sequence ID" value="NC_009074.1"/>
</dbReference>
<dbReference type="SMR" id="A3NE88"/>
<dbReference type="GeneID" id="93061745"/>
<dbReference type="KEGG" id="bpd:BURPS668_3655"/>
<dbReference type="HOGENOM" id="CLU_086034_5_3_4"/>
<dbReference type="GO" id="GO:0033281">
    <property type="term" value="C:TAT protein transport complex"/>
    <property type="evidence" value="ECO:0007669"/>
    <property type="project" value="UniProtKB-UniRule"/>
</dbReference>
<dbReference type="GO" id="GO:0008320">
    <property type="term" value="F:protein transmembrane transporter activity"/>
    <property type="evidence" value="ECO:0007669"/>
    <property type="project" value="UniProtKB-UniRule"/>
</dbReference>
<dbReference type="GO" id="GO:0043953">
    <property type="term" value="P:protein transport by the Tat complex"/>
    <property type="evidence" value="ECO:0007669"/>
    <property type="project" value="UniProtKB-UniRule"/>
</dbReference>
<dbReference type="Gene3D" id="1.20.5.3310">
    <property type="match status" value="1"/>
</dbReference>
<dbReference type="HAMAP" id="MF_00236">
    <property type="entry name" value="TatA_E"/>
    <property type="match status" value="1"/>
</dbReference>
<dbReference type="InterPro" id="IPR003369">
    <property type="entry name" value="TatA/B/E"/>
</dbReference>
<dbReference type="InterPro" id="IPR006312">
    <property type="entry name" value="TatA/E"/>
</dbReference>
<dbReference type="NCBIfam" id="NF002813">
    <property type="entry name" value="PRK02958.1"/>
    <property type="match status" value="1"/>
</dbReference>
<dbReference type="NCBIfam" id="TIGR01411">
    <property type="entry name" value="tatAE"/>
    <property type="match status" value="1"/>
</dbReference>
<dbReference type="PANTHER" id="PTHR42982">
    <property type="entry name" value="SEC-INDEPENDENT PROTEIN TRANSLOCASE PROTEIN TATA"/>
    <property type="match status" value="1"/>
</dbReference>
<dbReference type="PANTHER" id="PTHR42982:SF1">
    <property type="entry name" value="SEC-INDEPENDENT PROTEIN TRANSLOCASE PROTEIN TATA"/>
    <property type="match status" value="1"/>
</dbReference>
<dbReference type="Pfam" id="PF02416">
    <property type="entry name" value="TatA_B_E"/>
    <property type="match status" value="1"/>
</dbReference>
<organism>
    <name type="scientific">Burkholderia pseudomallei (strain 668)</name>
    <dbReference type="NCBI Taxonomy" id="320373"/>
    <lineage>
        <taxon>Bacteria</taxon>
        <taxon>Pseudomonadati</taxon>
        <taxon>Pseudomonadota</taxon>
        <taxon>Betaproteobacteria</taxon>
        <taxon>Burkholderiales</taxon>
        <taxon>Burkholderiaceae</taxon>
        <taxon>Burkholderia</taxon>
        <taxon>pseudomallei group</taxon>
    </lineage>
</organism>
<gene>
    <name evidence="1" type="primary">tatA</name>
    <name type="ordered locus">BURPS668_3655</name>
</gene>
<comment type="function">
    <text evidence="1">Part of the twin-arginine translocation (Tat) system that transports large folded proteins containing a characteristic twin-arginine motif in their signal peptide across membranes. TatA could form the protein-conducting channel of the Tat system.</text>
</comment>
<comment type="subunit">
    <text evidence="1">The Tat system comprises two distinct complexes: a TatABC complex, containing multiple copies of TatA, TatB and TatC subunits, and a separate TatA complex, containing only TatA subunits. Substrates initially bind to the TatABC complex, which probably triggers association of the separate TatA complex to form the active translocon.</text>
</comment>
<comment type="subcellular location">
    <subcellularLocation>
        <location evidence="1">Cell inner membrane</location>
        <topology evidence="1">Single-pass membrane protein</topology>
    </subcellularLocation>
</comment>
<comment type="similarity">
    <text evidence="1">Belongs to the TatA/E family.</text>
</comment>
<protein>
    <recommendedName>
        <fullName evidence="1">Sec-independent protein translocase protein TatA</fullName>
    </recommendedName>
</protein>
<reference key="1">
    <citation type="journal article" date="2010" name="Genome Biol. Evol.">
        <title>Continuing evolution of Burkholderia mallei through genome reduction and large-scale rearrangements.</title>
        <authorList>
            <person name="Losada L."/>
            <person name="Ronning C.M."/>
            <person name="DeShazer D."/>
            <person name="Woods D."/>
            <person name="Fedorova N."/>
            <person name="Kim H.S."/>
            <person name="Shabalina S.A."/>
            <person name="Pearson T.R."/>
            <person name="Brinkac L."/>
            <person name="Tan P."/>
            <person name="Nandi T."/>
            <person name="Crabtree J."/>
            <person name="Badger J."/>
            <person name="Beckstrom-Sternberg S."/>
            <person name="Saqib M."/>
            <person name="Schutzer S.E."/>
            <person name="Keim P."/>
            <person name="Nierman W.C."/>
        </authorList>
    </citation>
    <scope>NUCLEOTIDE SEQUENCE [LARGE SCALE GENOMIC DNA]</scope>
    <source>
        <strain>668</strain>
    </source>
</reference>
<sequence length="77" mass="8152">MGGLSIWHWLIVLLIVALVFGTKKLRNIGNDLGSAVKGFKDGMKESEAPADAQQLPRSGSVNVDAKDAARSSDSNKA</sequence>
<feature type="chain" id="PRO_1000044370" description="Sec-independent protein translocase protein TatA">
    <location>
        <begin position="1"/>
        <end position="77"/>
    </location>
</feature>
<feature type="transmembrane region" description="Helical" evidence="1">
    <location>
        <begin position="1"/>
        <end position="21"/>
    </location>
</feature>
<feature type="region of interest" description="Disordered" evidence="2">
    <location>
        <begin position="43"/>
        <end position="77"/>
    </location>
</feature>
<feature type="compositionally biased region" description="Basic and acidic residues" evidence="2">
    <location>
        <begin position="64"/>
        <end position="77"/>
    </location>
</feature>
<evidence type="ECO:0000255" key="1">
    <source>
        <dbReference type="HAMAP-Rule" id="MF_00236"/>
    </source>
</evidence>
<evidence type="ECO:0000256" key="2">
    <source>
        <dbReference type="SAM" id="MobiDB-lite"/>
    </source>
</evidence>
<proteinExistence type="inferred from homology"/>